<reference key="1">
    <citation type="submission" date="2006-12" db="EMBL/GenBank/DDBJ databases">
        <title>Complete sequence of Shewanella amazonensis SB2B.</title>
        <authorList>
            <consortium name="US DOE Joint Genome Institute"/>
            <person name="Copeland A."/>
            <person name="Lucas S."/>
            <person name="Lapidus A."/>
            <person name="Barry K."/>
            <person name="Detter J.C."/>
            <person name="Glavina del Rio T."/>
            <person name="Hammon N."/>
            <person name="Israni S."/>
            <person name="Dalin E."/>
            <person name="Tice H."/>
            <person name="Pitluck S."/>
            <person name="Munk A.C."/>
            <person name="Brettin T."/>
            <person name="Bruce D."/>
            <person name="Han C."/>
            <person name="Tapia R."/>
            <person name="Gilna P."/>
            <person name="Schmutz J."/>
            <person name="Larimer F."/>
            <person name="Land M."/>
            <person name="Hauser L."/>
            <person name="Kyrpides N."/>
            <person name="Mikhailova N."/>
            <person name="Fredrickson J."/>
            <person name="Richardson P."/>
        </authorList>
    </citation>
    <scope>NUCLEOTIDE SEQUENCE [LARGE SCALE GENOMIC DNA]</scope>
    <source>
        <strain>ATCC BAA-1098 / SB2B</strain>
    </source>
</reference>
<keyword id="KW-1185">Reference proteome</keyword>
<keyword id="KW-0687">Ribonucleoprotein</keyword>
<keyword id="KW-0689">Ribosomal protein</keyword>
<gene>
    <name evidence="1" type="primary">rpmA</name>
    <name type="ordered locus">Sama_2828</name>
</gene>
<protein>
    <recommendedName>
        <fullName evidence="1">Large ribosomal subunit protein bL27</fullName>
    </recommendedName>
    <alternativeName>
        <fullName evidence="3">50S ribosomal protein L27</fullName>
    </alternativeName>
</protein>
<organism>
    <name type="scientific">Shewanella amazonensis (strain ATCC BAA-1098 / SB2B)</name>
    <dbReference type="NCBI Taxonomy" id="326297"/>
    <lineage>
        <taxon>Bacteria</taxon>
        <taxon>Pseudomonadati</taxon>
        <taxon>Pseudomonadota</taxon>
        <taxon>Gammaproteobacteria</taxon>
        <taxon>Alteromonadales</taxon>
        <taxon>Shewanellaceae</taxon>
        <taxon>Shewanella</taxon>
    </lineage>
</organism>
<comment type="similarity">
    <text evidence="1">Belongs to the bacterial ribosomal protein bL27 family.</text>
</comment>
<accession>A1S9H4</accession>
<evidence type="ECO:0000255" key="1">
    <source>
        <dbReference type="HAMAP-Rule" id="MF_00539"/>
    </source>
</evidence>
<evidence type="ECO:0000256" key="2">
    <source>
        <dbReference type="SAM" id="MobiDB-lite"/>
    </source>
</evidence>
<evidence type="ECO:0000305" key="3"/>
<sequence>MAHKKAGGSTRNGRDSESKRLGVKRFGGESVLAGNIIVRQRGTKFHAGVNVGIGRDHTLFALTDGKVKFEVKGPNNRKFVSIED</sequence>
<feature type="chain" id="PRO_1000017596" description="Large ribosomal subunit protein bL27">
    <location>
        <begin position="1"/>
        <end position="84"/>
    </location>
</feature>
<feature type="region of interest" description="Disordered" evidence="2">
    <location>
        <begin position="1"/>
        <end position="22"/>
    </location>
</feature>
<dbReference type="EMBL" id="CP000507">
    <property type="protein sequence ID" value="ABM01031.1"/>
    <property type="molecule type" value="Genomic_DNA"/>
</dbReference>
<dbReference type="RefSeq" id="WP_011760936.1">
    <property type="nucleotide sequence ID" value="NC_008700.1"/>
</dbReference>
<dbReference type="SMR" id="A1S9H4"/>
<dbReference type="STRING" id="326297.Sama_2828"/>
<dbReference type="GeneID" id="93810433"/>
<dbReference type="KEGG" id="saz:Sama_2828"/>
<dbReference type="eggNOG" id="COG0211">
    <property type="taxonomic scope" value="Bacteria"/>
</dbReference>
<dbReference type="HOGENOM" id="CLU_095424_4_1_6"/>
<dbReference type="OrthoDB" id="9803474at2"/>
<dbReference type="Proteomes" id="UP000009175">
    <property type="component" value="Chromosome"/>
</dbReference>
<dbReference type="GO" id="GO:0022625">
    <property type="term" value="C:cytosolic large ribosomal subunit"/>
    <property type="evidence" value="ECO:0007669"/>
    <property type="project" value="TreeGrafter"/>
</dbReference>
<dbReference type="GO" id="GO:0003735">
    <property type="term" value="F:structural constituent of ribosome"/>
    <property type="evidence" value="ECO:0007669"/>
    <property type="project" value="InterPro"/>
</dbReference>
<dbReference type="GO" id="GO:0006412">
    <property type="term" value="P:translation"/>
    <property type="evidence" value="ECO:0007669"/>
    <property type="project" value="UniProtKB-UniRule"/>
</dbReference>
<dbReference type="FunFam" id="2.40.50.100:FF:000001">
    <property type="entry name" value="50S ribosomal protein L27"/>
    <property type="match status" value="1"/>
</dbReference>
<dbReference type="Gene3D" id="2.40.50.100">
    <property type="match status" value="1"/>
</dbReference>
<dbReference type="HAMAP" id="MF_00539">
    <property type="entry name" value="Ribosomal_bL27"/>
    <property type="match status" value="1"/>
</dbReference>
<dbReference type="InterPro" id="IPR001684">
    <property type="entry name" value="Ribosomal_bL27"/>
</dbReference>
<dbReference type="InterPro" id="IPR018261">
    <property type="entry name" value="Ribosomal_bL27_CS"/>
</dbReference>
<dbReference type="NCBIfam" id="TIGR00062">
    <property type="entry name" value="L27"/>
    <property type="match status" value="1"/>
</dbReference>
<dbReference type="PANTHER" id="PTHR15893:SF0">
    <property type="entry name" value="LARGE RIBOSOMAL SUBUNIT PROTEIN BL27M"/>
    <property type="match status" value="1"/>
</dbReference>
<dbReference type="PANTHER" id="PTHR15893">
    <property type="entry name" value="RIBOSOMAL PROTEIN L27"/>
    <property type="match status" value="1"/>
</dbReference>
<dbReference type="Pfam" id="PF01016">
    <property type="entry name" value="Ribosomal_L27"/>
    <property type="match status" value="1"/>
</dbReference>
<dbReference type="PRINTS" id="PR00063">
    <property type="entry name" value="RIBOSOMALL27"/>
</dbReference>
<dbReference type="SUPFAM" id="SSF110324">
    <property type="entry name" value="Ribosomal L27 protein-like"/>
    <property type="match status" value="1"/>
</dbReference>
<dbReference type="PROSITE" id="PS00831">
    <property type="entry name" value="RIBOSOMAL_L27"/>
    <property type="match status" value="1"/>
</dbReference>
<proteinExistence type="inferred from homology"/>
<name>RL27_SHEAM</name>